<sequence>MKLNPNDVVIIDAVRSPMGKTKNGVFRNVRAENLSAALVKELFKRNPNVDQKDVEDLIWGCVNQTLEQGFNMARAVSLLAGLPITCAAQTVNRLCGSSMSAIHTAAQAIMTGQGDVFVVGGVEHMGHVGMMHGVDVNPALSKHMAKASMMMGVTAEMLGKMHGVSREDQDAFAVRSHRLAHEATLQGRFNNEIVSIEGHDADGNKILVEVDEVIRPETSMESLAKLAPVFMPKVGTVTAGTSSALSDGASAMLMMSAKKAEELGLTPIAKVRSMAVAGCDPAIMGYGPVPATKKALKRAGLTIADIDIVELNEAFAAQSIPVLKDLGLLDLVDDKVNLNGGAIALGHPLGCSGTRISTTLLNVMREKDATVGLATMCIGMGQGIATVFERV</sequence>
<keyword id="KW-0012">Acyltransferase</keyword>
<keyword id="KW-0963">Cytoplasm</keyword>
<keyword id="KW-0276">Fatty acid metabolism</keyword>
<keyword id="KW-0442">Lipid degradation</keyword>
<keyword id="KW-0443">Lipid metabolism</keyword>
<keyword id="KW-0808">Transferase</keyword>
<organism>
    <name type="scientific">Marinomonas sp. (strain MWYL1)</name>
    <dbReference type="NCBI Taxonomy" id="400668"/>
    <lineage>
        <taxon>Bacteria</taxon>
        <taxon>Pseudomonadati</taxon>
        <taxon>Pseudomonadota</taxon>
        <taxon>Gammaproteobacteria</taxon>
        <taxon>Oceanospirillales</taxon>
        <taxon>Oceanospirillaceae</taxon>
        <taxon>Marinomonas</taxon>
    </lineage>
</organism>
<evidence type="ECO:0000255" key="1">
    <source>
        <dbReference type="HAMAP-Rule" id="MF_01620"/>
    </source>
</evidence>
<proteinExistence type="inferred from homology"/>
<dbReference type="EC" id="2.3.1.16" evidence="1"/>
<dbReference type="EMBL" id="CP000749">
    <property type="protein sequence ID" value="ABR70507.1"/>
    <property type="molecule type" value="Genomic_DNA"/>
</dbReference>
<dbReference type="SMR" id="A6VVM8"/>
<dbReference type="STRING" id="400668.Mmwyl1_1579"/>
<dbReference type="KEGG" id="mmw:Mmwyl1_1579"/>
<dbReference type="eggNOG" id="COG0183">
    <property type="taxonomic scope" value="Bacteria"/>
</dbReference>
<dbReference type="HOGENOM" id="CLU_031026_2_2_6"/>
<dbReference type="OrthoDB" id="9764638at2"/>
<dbReference type="UniPathway" id="UPA00659"/>
<dbReference type="GO" id="GO:0005737">
    <property type="term" value="C:cytoplasm"/>
    <property type="evidence" value="ECO:0007669"/>
    <property type="project" value="UniProtKB-SubCell"/>
</dbReference>
<dbReference type="GO" id="GO:0003988">
    <property type="term" value="F:acetyl-CoA C-acyltransferase activity"/>
    <property type="evidence" value="ECO:0007669"/>
    <property type="project" value="UniProtKB-UniRule"/>
</dbReference>
<dbReference type="GO" id="GO:0006635">
    <property type="term" value="P:fatty acid beta-oxidation"/>
    <property type="evidence" value="ECO:0007669"/>
    <property type="project" value="UniProtKB-UniRule"/>
</dbReference>
<dbReference type="GO" id="GO:0010124">
    <property type="term" value="P:phenylacetate catabolic process"/>
    <property type="evidence" value="ECO:0007669"/>
    <property type="project" value="TreeGrafter"/>
</dbReference>
<dbReference type="CDD" id="cd00751">
    <property type="entry name" value="thiolase"/>
    <property type="match status" value="1"/>
</dbReference>
<dbReference type="FunFam" id="3.40.47.10:FF:000010">
    <property type="entry name" value="Acetyl-CoA acetyltransferase (Thiolase)"/>
    <property type="match status" value="1"/>
</dbReference>
<dbReference type="Gene3D" id="3.40.47.10">
    <property type="match status" value="2"/>
</dbReference>
<dbReference type="HAMAP" id="MF_01620">
    <property type="entry name" value="FadA"/>
    <property type="match status" value="1"/>
</dbReference>
<dbReference type="InterPro" id="IPR012805">
    <property type="entry name" value="FadA"/>
</dbReference>
<dbReference type="InterPro" id="IPR002155">
    <property type="entry name" value="Thiolase"/>
</dbReference>
<dbReference type="InterPro" id="IPR016039">
    <property type="entry name" value="Thiolase-like"/>
</dbReference>
<dbReference type="InterPro" id="IPR050215">
    <property type="entry name" value="Thiolase-like_sf_Thiolase"/>
</dbReference>
<dbReference type="InterPro" id="IPR020615">
    <property type="entry name" value="Thiolase_acyl_enz_int_AS"/>
</dbReference>
<dbReference type="InterPro" id="IPR020610">
    <property type="entry name" value="Thiolase_AS"/>
</dbReference>
<dbReference type="InterPro" id="IPR020617">
    <property type="entry name" value="Thiolase_C"/>
</dbReference>
<dbReference type="InterPro" id="IPR020613">
    <property type="entry name" value="Thiolase_CS"/>
</dbReference>
<dbReference type="InterPro" id="IPR020616">
    <property type="entry name" value="Thiolase_N"/>
</dbReference>
<dbReference type="NCBIfam" id="TIGR01930">
    <property type="entry name" value="AcCoA-C-Actrans"/>
    <property type="match status" value="1"/>
</dbReference>
<dbReference type="NCBIfam" id="TIGR02445">
    <property type="entry name" value="fadA"/>
    <property type="match status" value="1"/>
</dbReference>
<dbReference type="NCBIfam" id="NF006510">
    <property type="entry name" value="PRK08947.1"/>
    <property type="match status" value="1"/>
</dbReference>
<dbReference type="PANTHER" id="PTHR43853:SF11">
    <property type="entry name" value="3-KETOACYL-COA THIOLASE FADA"/>
    <property type="match status" value="1"/>
</dbReference>
<dbReference type="PANTHER" id="PTHR43853">
    <property type="entry name" value="3-KETOACYL-COA THIOLASE, PEROXISOMAL"/>
    <property type="match status" value="1"/>
</dbReference>
<dbReference type="Pfam" id="PF02803">
    <property type="entry name" value="Thiolase_C"/>
    <property type="match status" value="1"/>
</dbReference>
<dbReference type="Pfam" id="PF00108">
    <property type="entry name" value="Thiolase_N"/>
    <property type="match status" value="1"/>
</dbReference>
<dbReference type="PIRSF" id="PIRSF000429">
    <property type="entry name" value="Ac-CoA_Ac_transf"/>
    <property type="match status" value="1"/>
</dbReference>
<dbReference type="SUPFAM" id="SSF53901">
    <property type="entry name" value="Thiolase-like"/>
    <property type="match status" value="2"/>
</dbReference>
<dbReference type="PROSITE" id="PS00098">
    <property type="entry name" value="THIOLASE_1"/>
    <property type="match status" value="1"/>
</dbReference>
<dbReference type="PROSITE" id="PS00737">
    <property type="entry name" value="THIOLASE_2"/>
    <property type="match status" value="1"/>
</dbReference>
<dbReference type="PROSITE" id="PS00099">
    <property type="entry name" value="THIOLASE_3"/>
    <property type="match status" value="1"/>
</dbReference>
<feature type="chain" id="PRO_1000088078" description="3-ketoacyl-CoA thiolase">
    <location>
        <begin position="1"/>
        <end position="391"/>
    </location>
</feature>
<feature type="active site" description="Acyl-thioester intermediate" evidence="1">
    <location>
        <position position="95"/>
    </location>
</feature>
<feature type="active site" description="Proton acceptor" evidence="1">
    <location>
        <position position="347"/>
    </location>
</feature>
<feature type="active site" description="Proton acceptor" evidence="1">
    <location>
        <position position="377"/>
    </location>
</feature>
<gene>
    <name evidence="1" type="primary">fadA</name>
    <name type="ordered locus">Mmwyl1_1579</name>
</gene>
<name>FADA_MARMS</name>
<protein>
    <recommendedName>
        <fullName evidence="1">3-ketoacyl-CoA thiolase</fullName>
        <ecNumber evidence="1">2.3.1.16</ecNumber>
    </recommendedName>
    <alternativeName>
        <fullName evidence="1">Acetyl-CoA acyltransferase</fullName>
    </alternativeName>
    <alternativeName>
        <fullName evidence="1">Beta-ketothiolase</fullName>
    </alternativeName>
    <alternativeName>
        <fullName evidence="1">Fatty acid oxidation complex subunit beta</fullName>
    </alternativeName>
</protein>
<reference key="1">
    <citation type="submission" date="2007-06" db="EMBL/GenBank/DDBJ databases">
        <title>Complete sequence of Marinomonas sp. MWYL1.</title>
        <authorList>
            <consortium name="US DOE Joint Genome Institute"/>
            <person name="Copeland A."/>
            <person name="Lucas S."/>
            <person name="Lapidus A."/>
            <person name="Barry K."/>
            <person name="Glavina del Rio T."/>
            <person name="Dalin E."/>
            <person name="Tice H."/>
            <person name="Pitluck S."/>
            <person name="Kiss H."/>
            <person name="Brettin T."/>
            <person name="Bruce D."/>
            <person name="Detter J.C."/>
            <person name="Han C."/>
            <person name="Schmutz J."/>
            <person name="Larimer F."/>
            <person name="Land M."/>
            <person name="Hauser L."/>
            <person name="Kyrpides N."/>
            <person name="Kim E."/>
            <person name="Johnston A.W.B."/>
            <person name="Todd J.D."/>
            <person name="Rogers R."/>
            <person name="Wexler M."/>
            <person name="Bond P.L."/>
            <person name="Li Y."/>
            <person name="Richardson P."/>
        </authorList>
    </citation>
    <scope>NUCLEOTIDE SEQUENCE [LARGE SCALE GENOMIC DNA]</scope>
    <source>
        <strain>MWYL1</strain>
    </source>
</reference>
<comment type="function">
    <text evidence="1">Catalyzes the final step of fatty acid oxidation in which acetyl-CoA is released and the CoA ester of a fatty acid two carbons shorter is formed.</text>
</comment>
<comment type="catalytic activity">
    <reaction evidence="1">
        <text>an acyl-CoA + acetyl-CoA = a 3-oxoacyl-CoA + CoA</text>
        <dbReference type="Rhea" id="RHEA:21564"/>
        <dbReference type="ChEBI" id="CHEBI:57287"/>
        <dbReference type="ChEBI" id="CHEBI:57288"/>
        <dbReference type="ChEBI" id="CHEBI:58342"/>
        <dbReference type="ChEBI" id="CHEBI:90726"/>
        <dbReference type="EC" id="2.3.1.16"/>
    </reaction>
</comment>
<comment type="pathway">
    <text evidence="1">Lipid metabolism; fatty acid beta-oxidation.</text>
</comment>
<comment type="subunit">
    <text evidence="1">Heterotetramer of two alpha chains (FadB) and two beta chains (FadA).</text>
</comment>
<comment type="subcellular location">
    <subcellularLocation>
        <location evidence="1">Cytoplasm</location>
    </subcellularLocation>
</comment>
<comment type="similarity">
    <text evidence="1">Belongs to the thiolase-like superfamily. Thiolase family.</text>
</comment>
<accession>A6VVM8</accession>